<proteinExistence type="evidence at transcript level"/>
<keyword id="KW-0010">Activator</keyword>
<keyword id="KW-0025">Alternative splicing</keyword>
<keyword id="KW-0112">Calmodulin-binding</keyword>
<keyword id="KW-0238">DNA-binding</keyword>
<keyword id="KW-0539">Nucleus</keyword>
<keyword id="KW-1185">Reference proteome</keyword>
<keyword id="KW-0804">Transcription</keyword>
<keyword id="KW-0805">Transcription regulation</keyword>
<reference key="1">
    <citation type="journal article" date="1999" name="Nature">
        <title>Sequence and analysis of chromosome 2 of the plant Arabidopsis thaliana.</title>
        <authorList>
            <person name="Lin X."/>
            <person name="Kaul S."/>
            <person name="Rounsley S.D."/>
            <person name="Shea T.P."/>
            <person name="Benito M.-I."/>
            <person name="Town C.D."/>
            <person name="Fujii C.Y."/>
            <person name="Mason T.M."/>
            <person name="Bowman C.L."/>
            <person name="Barnstead M.E."/>
            <person name="Feldblyum T.V."/>
            <person name="Buell C.R."/>
            <person name="Ketchum K.A."/>
            <person name="Lee J.J."/>
            <person name="Ronning C.M."/>
            <person name="Koo H.L."/>
            <person name="Moffat K.S."/>
            <person name="Cronin L.A."/>
            <person name="Shen M."/>
            <person name="Pai G."/>
            <person name="Van Aken S."/>
            <person name="Umayam L."/>
            <person name="Tallon L.J."/>
            <person name="Gill J.E."/>
            <person name="Adams M.D."/>
            <person name="Carrera A.J."/>
            <person name="Creasy T.H."/>
            <person name="Goodman H.M."/>
            <person name="Somerville C.R."/>
            <person name="Copenhaver G.P."/>
            <person name="Preuss D."/>
            <person name="Nierman W.C."/>
            <person name="White O."/>
            <person name="Eisen J.A."/>
            <person name="Salzberg S.L."/>
            <person name="Fraser C.M."/>
            <person name="Venter J.C."/>
        </authorList>
    </citation>
    <scope>NUCLEOTIDE SEQUENCE [LARGE SCALE GENOMIC DNA]</scope>
    <source>
        <strain>cv. Columbia</strain>
    </source>
</reference>
<reference key="2">
    <citation type="journal article" date="2017" name="Plant J.">
        <title>Araport11: a complete reannotation of the Arabidopsis thaliana reference genome.</title>
        <authorList>
            <person name="Cheng C.Y."/>
            <person name="Krishnakumar V."/>
            <person name="Chan A.P."/>
            <person name="Thibaud-Nissen F."/>
            <person name="Schobel S."/>
            <person name="Town C.D."/>
        </authorList>
    </citation>
    <scope>GENOME REANNOTATION</scope>
    <source>
        <strain>cv. Columbia</strain>
    </source>
</reference>
<reference key="3">
    <citation type="submission" date="2004-01" db="EMBL/GenBank/DDBJ databases">
        <title>Arabidopsis ORF clones.</title>
        <authorList>
            <person name="Cheuk R.F."/>
            <person name="Chen H."/>
            <person name="Kim C.J."/>
            <person name="Shinn P."/>
            <person name="Ecker J.R."/>
        </authorList>
    </citation>
    <scope>NUCLEOTIDE SEQUENCE [LARGE SCALE MRNA] (ISOFORM 2)</scope>
    <source>
        <strain>cv. Columbia</strain>
    </source>
</reference>
<reference key="4">
    <citation type="journal article" date="2002" name="J. Biol. Chem.">
        <title>Genes encoding calmodulin-binding proteins in the Arabidopsis genome.</title>
        <authorList>
            <person name="Reddy V.S."/>
            <person name="Ali G.S."/>
            <person name="Reddy A.S.N."/>
        </authorList>
    </citation>
    <scope>GENE FAMILY</scope>
    <scope>NOMENCLATURE</scope>
</reference>
<feature type="chain" id="PRO_0000433049" description="Calmodulin-binding protein 60 E">
    <location>
        <begin position="1"/>
        <end position="599"/>
    </location>
</feature>
<feature type="region of interest" description="Calmodulin-binding" evidence="1">
    <location>
        <begin position="1"/>
        <end position="80"/>
    </location>
</feature>
<feature type="region of interest" description="Disordered" evidence="3">
    <location>
        <begin position="1"/>
        <end position="21"/>
    </location>
</feature>
<feature type="region of interest" description="DNA-binding" evidence="1">
    <location>
        <begin position="150"/>
        <end position="273"/>
    </location>
</feature>
<feature type="splice variant" id="VSP_057664" description="In isoform 2.">
    <location>
        <begin position="1"/>
        <end position="96"/>
    </location>
</feature>
<feature type="splice variant" id="VSP_057665" description="In isoform 3.">
    <original>MNKRGYECSQEDTDKLPESKRQKVPALASVIVEAVKVDSLQRLCSSLEPLFRRI</original>
    <variation>MVWTNTQ</variation>
    <location>
        <begin position="1"/>
        <end position="54"/>
    </location>
</feature>
<evidence type="ECO:0000250" key="1">
    <source>
        <dbReference type="UniProtKB" id="F4K2R6"/>
    </source>
</evidence>
<evidence type="ECO:0000250" key="2">
    <source>
        <dbReference type="UniProtKB" id="Q9C9T2"/>
    </source>
</evidence>
<evidence type="ECO:0000256" key="3">
    <source>
        <dbReference type="SAM" id="MobiDB-lite"/>
    </source>
</evidence>
<evidence type="ECO:0000303" key="4">
    <source>
    </source>
</evidence>
<evidence type="ECO:0000305" key="5"/>
<evidence type="ECO:0000312" key="6">
    <source>
        <dbReference type="Araport" id="AT2G24300"/>
    </source>
</evidence>
<evidence type="ECO:0000312" key="7">
    <source>
        <dbReference type="EMBL" id="AAD18103.1"/>
    </source>
</evidence>
<evidence type="ECO:0000312" key="8">
    <source>
        <dbReference type="Proteomes" id="UP000006548"/>
    </source>
</evidence>
<comment type="function">
    <text evidence="1">Transcription activator that binds DNA in a sequence-specific manner, likely 5'-GAAATTTTGG-3', to promote the expression of target genes.</text>
</comment>
<comment type="subunit">
    <text evidence="1">Interacts with calmodulin (CaM).</text>
</comment>
<comment type="subcellular location">
    <subcellularLocation>
        <location evidence="2">Nucleus</location>
    </subcellularLocation>
</comment>
<comment type="alternative products">
    <event type="alternative splicing"/>
    <isoform>
        <id>F4IPM3-1</id>
        <name>1</name>
        <sequence type="displayed"/>
    </isoform>
    <isoform>
        <id>F4IPM3-2</id>
        <name>2</name>
        <sequence type="described" ref="VSP_057664"/>
    </isoform>
    <isoform>
        <id>F4IPM3-3</id>
        <name>3</name>
        <sequence type="described" ref="VSP_057665"/>
    </isoform>
</comment>
<comment type="similarity">
    <text evidence="5">Belongs to the plant ACBP60 protein family.</text>
</comment>
<sequence length="599" mass="67969">MNKRGYECSQEDTDKLPESKRQKVPALASVIVEAVKVDSLQRLCSSLEPLFRRIVSEEVERALSRLGNAKLTSRSPEPKRIQDRNGRNLQLHFRTRMPPHLFTGGKVEGERGSAIHVVLIDANTGNVVQTGEESASKLNVVVLEGDFNDEDDEDWTREHFESFEVKEREGKRPILTGDTQIVLKEGVGTLGELTFTDNSSWIRSRKFRLGVKPASGYGDSFCIREAKTEPFAVKDHRGELYKKHYPPAVHDEVWRLDRIAKDGVLHKKLLKANIVTVEDFLRLLVKDPQKLRNLLGSGMSNRMWENTVEHAKTCVLGGKLYVFYTDQTHATGVVFNHIYEFRGLITNGQFLSLESLNHDQKISADILVKLAYENWHKAIEYDGKLLNCLPVAEKEIKSLLEPKMVSAQTAPNHQQLHNQNNRQTVQGHQNAITYSPVPQPIDYPQFAQQHCNQLLPSFPCNVQDYNRSMESSNDSSSYNGEDWCPPRAAGQGLEDIFSEEIRLRSSEMLETDDMQRLLKTFGIGVNTVGTQGGFGQTDESCYGYSIPYQAQIDNTYRRERNRGSGKAVVGWLKLKAALRWGIFIRKKAAERRPQIVEID</sequence>
<dbReference type="EMBL" id="AC006403">
    <property type="protein sequence ID" value="AAD18103.1"/>
    <property type="molecule type" value="Genomic_DNA"/>
</dbReference>
<dbReference type="EMBL" id="CP002685">
    <property type="protein sequence ID" value="AEC07559.1"/>
    <property type="molecule type" value="Genomic_DNA"/>
</dbReference>
<dbReference type="EMBL" id="CP002685">
    <property type="protein sequence ID" value="AEC07560.1"/>
    <property type="molecule type" value="Genomic_DNA"/>
</dbReference>
<dbReference type="EMBL" id="BT011245">
    <property type="protein sequence ID" value="AAR92281.1"/>
    <property type="molecule type" value="mRNA"/>
</dbReference>
<dbReference type="EMBL" id="BT012547">
    <property type="protein sequence ID" value="AAS99691.1"/>
    <property type="molecule type" value="mRNA"/>
</dbReference>
<dbReference type="PIR" id="A84635">
    <property type="entry name" value="A84635"/>
</dbReference>
<dbReference type="RefSeq" id="NP_180007.2">
    <molecule id="F4IPM3-3"/>
    <property type="nucleotide sequence ID" value="NM_127992.3"/>
</dbReference>
<dbReference type="RefSeq" id="NP_973527.1">
    <molecule id="F4IPM3-1"/>
    <property type="nucleotide sequence ID" value="NM_201798.1"/>
</dbReference>
<dbReference type="FunCoup" id="F4IPM3">
    <property type="interactions" value="35"/>
</dbReference>
<dbReference type="STRING" id="3702.F4IPM3"/>
<dbReference type="PaxDb" id="3702-AT2G24300.2"/>
<dbReference type="ProteomicsDB" id="239096">
    <molecule id="F4IPM3-1"/>
</dbReference>
<dbReference type="EnsemblPlants" id="AT2G24300.1">
    <molecule id="F4IPM3-3"/>
    <property type="protein sequence ID" value="AT2G24300.1"/>
    <property type="gene ID" value="AT2G24300"/>
</dbReference>
<dbReference type="EnsemblPlants" id="AT2G24300.2">
    <molecule id="F4IPM3-1"/>
    <property type="protein sequence ID" value="AT2G24300.2"/>
    <property type="gene ID" value="AT2G24300"/>
</dbReference>
<dbReference type="GeneID" id="816966"/>
<dbReference type="Gramene" id="AT2G24300.1">
    <molecule id="F4IPM3-3"/>
    <property type="protein sequence ID" value="AT2G24300.1"/>
    <property type="gene ID" value="AT2G24300"/>
</dbReference>
<dbReference type="Gramene" id="AT2G24300.2">
    <molecule id="F4IPM3-1"/>
    <property type="protein sequence ID" value="AT2G24300.2"/>
    <property type="gene ID" value="AT2G24300"/>
</dbReference>
<dbReference type="KEGG" id="ath:AT2G24300"/>
<dbReference type="Araport" id="AT2G24300"/>
<dbReference type="TAIR" id="AT2G24300"/>
<dbReference type="eggNOG" id="ENOG502R2A5">
    <property type="taxonomic scope" value="Eukaryota"/>
</dbReference>
<dbReference type="HOGENOM" id="CLU_031504_3_0_1"/>
<dbReference type="InParanoid" id="F4IPM3"/>
<dbReference type="OMA" id="RQTVQCH"/>
<dbReference type="OrthoDB" id="512636at2759"/>
<dbReference type="PhylomeDB" id="F4IPM3"/>
<dbReference type="PRO" id="PR:F4IPM3"/>
<dbReference type="Proteomes" id="UP000006548">
    <property type="component" value="Chromosome 2"/>
</dbReference>
<dbReference type="ExpressionAtlas" id="F4IPM3">
    <property type="expression patterns" value="baseline and differential"/>
</dbReference>
<dbReference type="GO" id="GO:0005634">
    <property type="term" value="C:nucleus"/>
    <property type="evidence" value="ECO:0007669"/>
    <property type="project" value="UniProtKB-SubCell"/>
</dbReference>
<dbReference type="GO" id="GO:0005516">
    <property type="term" value="F:calmodulin binding"/>
    <property type="evidence" value="ECO:0007669"/>
    <property type="project" value="UniProtKB-KW"/>
</dbReference>
<dbReference type="GO" id="GO:0003677">
    <property type="term" value="F:DNA binding"/>
    <property type="evidence" value="ECO:0007669"/>
    <property type="project" value="UniProtKB-KW"/>
</dbReference>
<dbReference type="InterPro" id="IPR046829">
    <property type="entry name" value="Calmod_bind_C"/>
</dbReference>
<dbReference type="InterPro" id="IPR046830">
    <property type="entry name" value="Calmod_bind_M"/>
</dbReference>
<dbReference type="InterPro" id="IPR046831">
    <property type="entry name" value="Calmodulin_bind_N"/>
</dbReference>
<dbReference type="InterPro" id="IPR012416">
    <property type="entry name" value="CBP60"/>
</dbReference>
<dbReference type="PANTHER" id="PTHR31713:SF51">
    <property type="entry name" value="CALMODULIN-BINDING PROTEIN 60 E"/>
    <property type="match status" value="1"/>
</dbReference>
<dbReference type="PANTHER" id="PTHR31713">
    <property type="entry name" value="OS02G0177800 PROTEIN"/>
    <property type="match status" value="1"/>
</dbReference>
<dbReference type="Pfam" id="PF20452">
    <property type="entry name" value="Calmod_bind_C"/>
    <property type="match status" value="1"/>
</dbReference>
<dbReference type="Pfam" id="PF20451">
    <property type="entry name" value="Calmod_bind_M"/>
    <property type="match status" value="1"/>
</dbReference>
<dbReference type="Pfam" id="PF07887">
    <property type="entry name" value="Calmodulin_bind"/>
    <property type="match status" value="1"/>
</dbReference>
<protein>
    <recommendedName>
        <fullName evidence="4">Calmodulin-binding protein 60 E</fullName>
    </recommendedName>
</protein>
<name>CB60E_ARATH</name>
<accession>F4IPM3</accession>
<accession>F4IPM4</accession>
<accession>Q9ZQ37</accession>
<organism evidence="8">
    <name type="scientific">Arabidopsis thaliana</name>
    <name type="common">Mouse-ear cress</name>
    <dbReference type="NCBI Taxonomy" id="3702"/>
    <lineage>
        <taxon>Eukaryota</taxon>
        <taxon>Viridiplantae</taxon>
        <taxon>Streptophyta</taxon>
        <taxon>Embryophyta</taxon>
        <taxon>Tracheophyta</taxon>
        <taxon>Spermatophyta</taxon>
        <taxon>Magnoliopsida</taxon>
        <taxon>eudicotyledons</taxon>
        <taxon>Gunneridae</taxon>
        <taxon>Pentapetalae</taxon>
        <taxon>rosids</taxon>
        <taxon>malvids</taxon>
        <taxon>Brassicales</taxon>
        <taxon>Brassicaceae</taxon>
        <taxon>Camelineae</taxon>
        <taxon>Arabidopsis</taxon>
    </lineage>
</organism>
<gene>
    <name evidence="4" type="primary">CBP60E</name>
    <name evidence="6" type="ordered locus">At2g24300</name>
    <name evidence="7" type="ORF">T28I24.3</name>
</gene>